<accession>Q07VY9</accession>
<reference key="1">
    <citation type="submission" date="2006-08" db="EMBL/GenBank/DDBJ databases">
        <title>Complete sequence of Shewanella frigidimarina NCIMB 400.</title>
        <authorList>
            <consortium name="US DOE Joint Genome Institute"/>
            <person name="Copeland A."/>
            <person name="Lucas S."/>
            <person name="Lapidus A."/>
            <person name="Barry K."/>
            <person name="Detter J.C."/>
            <person name="Glavina del Rio T."/>
            <person name="Hammon N."/>
            <person name="Israni S."/>
            <person name="Dalin E."/>
            <person name="Tice H."/>
            <person name="Pitluck S."/>
            <person name="Fredrickson J.K."/>
            <person name="Kolker E."/>
            <person name="McCuel L.A."/>
            <person name="DiChristina T."/>
            <person name="Nealson K.H."/>
            <person name="Newman D."/>
            <person name="Tiedje J.M."/>
            <person name="Zhou J."/>
            <person name="Romine M.F."/>
            <person name="Culley D.E."/>
            <person name="Serres M."/>
            <person name="Chertkov O."/>
            <person name="Brettin T."/>
            <person name="Bruce D."/>
            <person name="Han C."/>
            <person name="Tapia R."/>
            <person name="Gilna P."/>
            <person name="Schmutz J."/>
            <person name="Larimer F."/>
            <person name="Land M."/>
            <person name="Hauser L."/>
            <person name="Kyrpides N."/>
            <person name="Mikhailova N."/>
            <person name="Richardson P."/>
        </authorList>
    </citation>
    <scope>NUCLEOTIDE SEQUENCE [LARGE SCALE GENOMIC DNA]</scope>
    <source>
        <strain>NCIMB 400</strain>
    </source>
</reference>
<organism>
    <name type="scientific">Shewanella frigidimarina (strain NCIMB 400)</name>
    <dbReference type="NCBI Taxonomy" id="318167"/>
    <lineage>
        <taxon>Bacteria</taxon>
        <taxon>Pseudomonadati</taxon>
        <taxon>Pseudomonadota</taxon>
        <taxon>Gammaproteobacteria</taxon>
        <taxon>Alteromonadales</taxon>
        <taxon>Shewanellaceae</taxon>
        <taxon>Shewanella</taxon>
    </lineage>
</organism>
<feature type="chain" id="PRO_5000131204" description="UPF0391 membrane protein Sfri_4000">
    <location>
        <begin position="1"/>
        <end position="58"/>
    </location>
</feature>
<feature type="transmembrane region" description="Helical" evidence="1">
    <location>
        <begin position="6"/>
        <end position="26"/>
    </location>
</feature>
<feature type="transmembrane region" description="Helical" evidence="1">
    <location>
        <begin position="27"/>
        <end position="47"/>
    </location>
</feature>
<gene>
    <name type="ordered locus">Sfri_4000</name>
</gene>
<keyword id="KW-1003">Cell membrane</keyword>
<keyword id="KW-0472">Membrane</keyword>
<keyword id="KW-1185">Reference proteome</keyword>
<keyword id="KW-0812">Transmembrane</keyword>
<keyword id="KW-1133">Transmembrane helix</keyword>
<evidence type="ECO:0000255" key="1">
    <source>
        <dbReference type="HAMAP-Rule" id="MF_01361"/>
    </source>
</evidence>
<sequence length="58" mass="6020">MLGWTLMFLVIAVIAGLFGFTGIAGAAAGIAKIIFFIFIVLLVISLVANAIRGKAPRA</sequence>
<protein>
    <recommendedName>
        <fullName evidence="1">UPF0391 membrane protein Sfri_4000</fullName>
    </recommendedName>
</protein>
<proteinExistence type="inferred from homology"/>
<dbReference type="EMBL" id="CP000447">
    <property type="protein sequence ID" value="ABI73825.1"/>
    <property type="molecule type" value="Genomic_DNA"/>
</dbReference>
<dbReference type="STRING" id="318167.Sfri_4000"/>
<dbReference type="KEGG" id="sfr:Sfri_4000"/>
<dbReference type="eggNOG" id="COG5487">
    <property type="taxonomic scope" value="Bacteria"/>
</dbReference>
<dbReference type="HOGENOM" id="CLU_187346_1_0_6"/>
<dbReference type="Proteomes" id="UP000000684">
    <property type="component" value="Chromosome"/>
</dbReference>
<dbReference type="GO" id="GO:0005886">
    <property type="term" value="C:plasma membrane"/>
    <property type="evidence" value="ECO:0007669"/>
    <property type="project" value="UniProtKB-SubCell"/>
</dbReference>
<dbReference type="HAMAP" id="MF_01361">
    <property type="entry name" value="UPF0391"/>
    <property type="match status" value="1"/>
</dbReference>
<dbReference type="InterPro" id="IPR009760">
    <property type="entry name" value="DUF1328"/>
</dbReference>
<dbReference type="NCBIfam" id="NF010226">
    <property type="entry name" value="PRK13682.1-1"/>
    <property type="match status" value="1"/>
</dbReference>
<dbReference type="NCBIfam" id="NF010228">
    <property type="entry name" value="PRK13682.1-3"/>
    <property type="match status" value="1"/>
</dbReference>
<dbReference type="NCBIfam" id="NF010229">
    <property type="entry name" value="PRK13682.1-4"/>
    <property type="match status" value="1"/>
</dbReference>
<dbReference type="Pfam" id="PF07043">
    <property type="entry name" value="DUF1328"/>
    <property type="match status" value="1"/>
</dbReference>
<dbReference type="PIRSF" id="PIRSF036466">
    <property type="entry name" value="UCP036466"/>
    <property type="match status" value="1"/>
</dbReference>
<comment type="subcellular location">
    <subcellularLocation>
        <location evidence="1">Cell membrane</location>
        <topology evidence="1">Multi-pass membrane protein</topology>
    </subcellularLocation>
</comment>
<comment type="similarity">
    <text evidence="1">Belongs to the UPF0391 family.</text>
</comment>
<name>Y4000_SHEFN</name>